<gene>
    <name evidence="2" type="primary">purD</name>
    <name type="ordered locus">LMOf2365_1789</name>
</gene>
<name>PUR2_LISMF</name>
<organism>
    <name type="scientific">Listeria monocytogenes serotype 4b (strain F2365)</name>
    <dbReference type="NCBI Taxonomy" id="265669"/>
    <lineage>
        <taxon>Bacteria</taxon>
        <taxon>Bacillati</taxon>
        <taxon>Bacillota</taxon>
        <taxon>Bacilli</taxon>
        <taxon>Bacillales</taxon>
        <taxon>Listeriaceae</taxon>
        <taxon>Listeria</taxon>
    </lineage>
</organism>
<comment type="catalytic activity">
    <reaction evidence="2">
        <text>5-phospho-beta-D-ribosylamine + glycine + ATP = N(1)-(5-phospho-beta-D-ribosyl)glycinamide + ADP + phosphate + H(+)</text>
        <dbReference type="Rhea" id="RHEA:17453"/>
        <dbReference type="ChEBI" id="CHEBI:15378"/>
        <dbReference type="ChEBI" id="CHEBI:30616"/>
        <dbReference type="ChEBI" id="CHEBI:43474"/>
        <dbReference type="ChEBI" id="CHEBI:57305"/>
        <dbReference type="ChEBI" id="CHEBI:58681"/>
        <dbReference type="ChEBI" id="CHEBI:143788"/>
        <dbReference type="ChEBI" id="CHEBI:456216"/>
        <dbReference type="EC" id="6.3.4.13"/>
    </reaction>
</comment>
<comment type="cofactor">
    <cofactor evidence="1">
        <name>Mg(2+)</name>
        <dbReference type="ChEBI" id="CHEBI:18420"/>
    </cofactor>
    <cofactor evidence="1">
        <name>Mn(2+)</name>
        <dbReference type="ChEBI" id="CHEBI:29035"/>
    </cofactor>
    <text evidence="1">Binds 1 Mg(2+) or Mn(2+) ion per subunit.</text>
</comment>
<comment type="pathway">
    <text evidence="2">Purine metabolism; IMP biosynthesis via de novo pathway; N(1)-(5-phospho-D-ribosyl)glycinamide from 5-phospho-alpha-D-ribose 1-diphosphate: step 2/2.</text>
</comment>
<comment type="similarity">
    <text evidence="2">Belongs to the GARS family.</text>
</comment>
<proteinExistence type="inferred from homology"/>
<protein>
    <recommendedName>
        <fullName evidence="2">Phosphoribosylamine--glycine ligase</fullName>
        <ecNumber evidence="2">6.3.4.13</ecNumber>
    </recommendedName>
    <alternativeName>
        <fullName evidence="2">GARS</fullName>
    </alternativeName>
    <alternativeName>
        <fullName evidence="2">Glycinamide ribonucleotide synthetase</fullName>
    </alternativeName>
    <alternativeName>
        <fullName evidence="2">Phosphoribosylglycinamide synthetase</fullName>
    </alternativeName>
</protein>
<sequence>MNLLVVGSGGREHAISKKLLESNNVENVYCAPGNDGMRLDNIQLVAISETDKAGLIDFAKKAEIAFVIVGPEVPLLEGVVDALEEAGIKAFGPKANAALIEGSKDFAKQFMEKYAIPTAASKTFTDYAEAKAYLDERGVPIVIKADGLAAGKGVTVALEMEEAVLALKDMMLEEKFGDASLKVVIEDFLAGEEFSLMAFVNGEEVYPMAIAQDHKRAYEGDKGPNTGGMGAYSPVPHISETVVDEAVEKILLPAAKGMVKEGRYFRGILYAGLILTAEGPKVIEFNARFGDPETQVVLPRLESDFAALIDALLHNEKPDVRFKKSGITLGVVLASAGYPEHYEKGNKLTGLNDVAEDVAIYHAGTKQDENDDFISDGGRVLLLAKEAETMTDARTLLYPEMQKLDNPNFFYRIDIGTKAE</sequence>
<dbReference type="EC" id="6.3.4.13" evidence="2"/>
<dbReference type="EMBL" id="AE017262">
    <property type="protein sequence ID" value="AAT04560.1"/>
    <property type="molecule type" value="Genomic_DNA"/>
</dbReference>
<dbReference type="RefSeq" id="WP_003728225.1">
    <property type="nucleotide sequence ID" value="NC_002973.6"/>
</dbReference>
<dbReference type="SMR" id="Q71YQ4"/>
<dbReference type="KEGG" id="lmf:LMOf2365_1789"/>
<dbReference type="HOGENOM" id="CLU_027420_3_1_9"/>
<dbReference type="UniPathway" id="UPA00074">
    <property type="reaction ID" value="UER00125"/>
</dbReference>
<dbReference type="GO" id="GO:0005524">
    <property type="term" value="F:ATP binding"/>
    <property type="evidence" value="ECO:0007669"/>
    <property type="project" value="UniProtKB-KW"/>
</dbReference>
<dbReference type="GO" id="GO:0046872">
    <property type="term" value="F:metal ion binding"/>
    <property type="evidence" value="ECO:0007669"/>
    <property type="project" value="UniProtKB-KW"/>
</dbReference>
<dbReference type="GO" id="GO:0004637">
    <property type="term" value="F:phosphoribosylamine-glycine ligase activity"/>
    <property type="evidence" value="ECO:0007669"/>
    <property type="project" value="UniProtKB-UniRule"/>
</dbReference>
<dbReference type="GO" id="GO:0006189">
    <property type="term" value="P:'de novo' IMP biosynthetic process"/>
    <property type="evidence" value="ECO:0007669"/>
    <property type="project" value="UniProtKB-UniRule"/>
</dbReference>
<dbReference type="GO" id="GO:0009113">
    <property type="term" value="P:purine nucleobase biosynthetic process"/>
    <property type="evidence" value="ECO:0007669"/>
    <property type="project" value="InterPro"/>
</dbReference>
<dbReference type="FunFam" id="3.30.1490.20:FF:000006">
    <property type="entry name" value="phosphoribosylamine--glycine ligase, chloroplastic-like"/>
    <property type="match status" value="1"/>
</dbReference>
<dbReference type="Gene3D" id="3.40.50.20">
    <property type="match status" value="1"/>
</dbReference>
<dbReference type="Gene3D" id="3.30.1490.20">
    <property type="entry name" value="ATP-grasp fold, A domain"/>
    <property type="match status" value="1"/>
</dbReference>
<dbReference type="Gene3D" id="3.30.470.20">
    <property type="entry name" value="ATP-grasp fold, B domain"/>
    <property type="match status" value="1"/>
</dbReference>
<dbReference type="Gene3D" id="3.90.600.10">
    <property type="entry name" value="Phosphoribosylglycinamide synthetase, C-terminal domain"/>
    <property type="match status" value="1"/>
</dbReference>
<dbReference type="HAMAP" id="MF_00138">
    <property type="entry name" value="GARS"/>
    <property type="match status" value="1"/>
</dbReference>
<dbReference type="InterPro" id="IPR011761">
    <property type="entry name" value="ATP-grasp"/>
</dbReference>
<dbReference type="InterPro" id="IPR013815">
    <property type="entry name" value="ATP_grasp_subdomain_1"/>
</dbReference>
<dbReference type="InterPro" id="IPR016185">
    <property type="entry name" value="PreATP-grasp_dom_sf"/>
</dbReference>
<dbReference type="InterPro" id="IPR020561">
    <property type="entry name" value="PRibGlycinamid_synth_ATP-grasp"/>
</dbReference>
<dbReference type="InterPro" id="IPR000115">
    <property type="entry name" value="PRibGlycinamide_synth"/>
</dbReference>
<dbReference type="InterPro" id="IPR020560">
    <property type="entry name" value="PRibGlycinamide_synth_C-dom"/>
</dbReference>
<dbReference type="InterPro" id="IPR037123">
    <property type="entry name" value="PRibGlycinamide_synth_C_sf"/>
</dbReference>
<dbReference type="InterPro" id="IPR020559">
    <property type="entry name" value="PRibGlycinamide_synth_CS"/>
</dbReference>
<dbReference type="InterPro" id="IPR020562">
    <property type="entry name" value="PRibGlycinamide_synth_N"/>
</dbReference>
<dbReference type="InterPro" id="IPR011054">
    <property type="entry name" value="Rudment_hybrid_motif"/>
</dbReference>
<dbReference type="NCBIfam" id="TIGR00877">
    <property type="entry name" value="purD"/>
    <property type="match status" value="1"/>
</dbReference>
<dbReference type="PANTHER" id="PTHR43472">
    <property type="entry name" value="PHOSPHORIBOSYLAMINE--GLYCINE LIGASE"/>
    <property type="match status" value="1"/>
</dbReference>
<dbReference type="PANTHER" id="PTHR43472:SF1">
    <property type="entry name" value="PHOSPHORIBOSYLAMINE--GLYCINE LIGASE, CHLOROPLASTIC"/>
    <property type="match status" value="1"/>
</dbReference>
<dbReference type="Pfam" id="PF01071">
    <property type="entry name" value="GARS_A"/>
    <property type="match status" value="1"/>
</dbReference>
<dbReference type="Pfam" id="PF02843">
    <property type="entry name" value="GARS_C"/>
    <property type="match status" value="1"/>
</dbReference>
<dbReference type="Pfam" id="PF02844">
    <property type="entry name" value="GARS_N"/>
    <property type="match status" value="1"/>
</dbReference>
<dbReference type="SMART" id="SM01209">
    <property type="entry name" value="GARS_A"/>
    <property type="match status" value="1"/>
</dbReference>
<dbReference type="SMART" id="SM01210">
    <property type="entry name" value="GARS_C"/>
    <property type="match status" value="1"/>
</dbReference>
<dbReference type="SUPFAM" id="SSF56059">
    <property type="entry name" value="Glutathione synthetase ATP-binding domain-like"/>
    <property type="match status" value="1"/>
</dbReference>
<dbReference type="SUPFAM" id="SSF52440">
    <property type="entry name" value="PreATP-grasp domain"/>
    <property type="match status" value="1"/>
</dbReference>
<dbReference type="SUPFAM" id="SSF51246">
    <property type="entry name" value="Rudiment single hybrid motif"/>
    <property type="match status" value="1"/>
</dbReference>
<dbReference type="PROSITE" id="PS50975">
    <property type="entry name" value="ATP_GRASP"/>
    <property type="match status" value="1"/>
</dbReference>
<dbReference type="PROSITE" id="PS00184">
    <property type="entry name" value="GARS"/>
    <property type="match status" value="1"/>
</dbReference>
<accession>Q71YQ4</accession>
<keyword id="KW-0067">ATP-binding</keyword>
<keyword id="KW-0436">Ligase</keyword>
<keyword id="KW-0460">Magnesium</keyword>
<keyword id="KW-0464">Manganese</keyword>
<keyword id="KW-0479">Metal-binding</keyword>
<keyword id="KW-0547">Nucleotide-binding</keyword>
<keyword id="KW-0658">Purine biosynthesis</keyword>
<reference key="1">
    <citation type="journal article" date="2004" name="Nucleic Acids Res.">
        <title>Whole genome comparisons of serotype 4b and 1/2a strains of the food-borne pathogen Listeria monocytogenes reveal new insights into the core genome components of this species.</title>
        <authorList>
            <person name="Nelson K.E."/>
            <person name="Fouts D.E."/>
            <person name="Mongodin E.F."/>
            <person name="Ravel J."/>
            <person name="DeBoy R.T."/>
            <person name="Kolonay J.F."/>
            <person name="Rasko D.A."/>
            <person name="Angiuoli S.V."/>
            <person name="Gill S.R."/>
            <person name="Paulsen I.T."/>
            <person name="Peterson J.D."/>
            <person name="White O."/>
            <person name="Nelson W.C."/>
            <person name="Nierman W.C."/>
            <person name="Beanan M.J."/>
            <person name="Brinkac L.M."/>
            <person name="Daugherty S.C."/>
            <person name="Dodson R.J."/>
            <person name="Durkin A.S."/>
            <person name="Madupu R."/>
            <person name="Haft D.H."/>
            <person name="Selengut J."/>
            <person name="Van Aken S.E."/>
            <person name="Khouri H.M."/>
            <person name="Fedorova N."/>
            <person name="Forberger H.A."/>
            <person name="Tran B."/>
            <person name="Kathariou S."/>
            <person name="Wonderling L.D."/>
            <person name="Uhlich G.A."/>
            <person name="Bayles D.O."/>
            <person name="Luchansky J.B."/>
            <person name="Fraser C.M."/>
        </authorList>
    </citation>
    <scope>NUCLEOTIDE SEQUENCE [LARGE SCALE GENOMIC DNA]</scope>
    <source>
        <strain>F2365</strain>
    </source>
</reference>
<feature type="chain" id="PRO_0000151461" description="Phosphoribosylamine--glycine ligase">
    <location>
        <begin position="1"/>
        <end position="420"/>
    </location>
</feature>
<feature type="domain" description="ATP-grasp" evidence="2">
    <location>
        <begin position="108"/>
        <end position="314"/>
    </location>
</feature>
<feature type="binding site" evidence="2">
    <location>
        <begin position="134"/>
        <end position="195"/>
    </location>
    <ligand>
        <name>ATP</name>
        <dbReference type="ChEBI" id="CHEBI:30616"/>
    </ligand>
</feature>
<feature type="binding site" evidence="2">
    <location>
        <position position="284"/>
    </location>
    <ligand>
        <name>Mg(2+)</name>
        <dbReference type="ChEBI" id="CHEBI:18420"/>
    </ligand>
</feature>
<feature type="binding site" evidence="2">
    <location>
        <position position="286"/>
    </location>
    <ligand>
        <name>Mg(2+)</name>
        <dbReference type="ChEBI" id="CHEBI:18420"/>
    </ligand>
</feature>
<evidence type="ECO:0000250" key="1"/>
<evidence type="ECO:0000255" key="2">
    <source>
        <dbReference type="HAMAP-Rule" id="MF_00138"/>
    </source>
</evidence>